<reference key="1">
    <citation type="journal article" date="1997" name="Plant Syst. Evol.">
        <title>Phylogenetic analysis of Iridaceae with parsimony and distance methods using the plastid gene rps4.</title>
        <authorList>
            <person name="Souza-Chies T.T."/>
            <person name="Bittar G."/>
            <person name="Nadot S."/>
            <person name="Carter L."/>
            <person name="Besin E."/>
            <person name="Lejeune B.P."/>
        </authorList>
    </citation>
    <scope>NUCLEOTIDE SEQUENCE [GENOMIC DNA]</scope>
</reference>
<feature type="chain" id="PRO_0000132527" description="Small ribosomal subunit protein uS4c">
    <location>
        <begin position="1"/>
        <end position="196" status="greater than"/>
    </location>
</feature>
<feature type="domain" description="S4 RNA-binding">
    <location>
        <begin position="89"/>
        <end position="150"/>
    </location>
</feature>
<feature type="region of interest" description="Disordered" evidence="2">
    <location>
        <begin position="15"/>
        <end position="36"/>
    </location>
</feature>
<feature type="non-terminal residue">
    <location>
        <position position="196"/>
    </location>
</feature>
<proteinExistence type="inferred from homology"/>
<name>RR4_AGABR</name>
<keyword id="KW-0150">Chloroplast</keyword>
<keyword id="KW-0934">Plastid</keyword>
<keyword id="KW-0687">Ribonucleoprotein</keyword>
<keyword id="KW-0689">Ribosomal protein</keyword>
<keyword id="KW-0694">RNA-binding</keyword>
<keyword id="KW-0699">rRNA-binding</keyword>
<protein>
    <recommendedName>
        <fullName evidence="3">Small ribosomal subunit protein uS4c</fullName>
    </recommendedName>
    <alternativeName>
        <fullName>30S ribosomal protein S4, chloroplastic</fullName>
    </alternativeName>
</protein>
<sequence length="196" mass="22766">MSRYRGPRFKKIRRLGTLPGLTSKRPRSGSDLKNPLRSVKRSQYRIRLEEKQKLRFHYGLTERQLLRYVHIAGKAKGSTGQVLLQLLEMRLDNILFRLGMASTIPGARQLVNHRHILVNGRIVDIPSYRCKPRDIITTKDKQRSKALIQNYIASSPHEELPNHLTIDSFQYKGLVNQIIDSKWIGLKINELLVVEY</sequence>
<organism>
    <name type="scientific">Agave bracteosa</name>
    <name type="common">Squid agave</name>
    <dbReference type="NCBI Taxonomy" id="59020"/>
    <lineage>
        <taxon>Eukaryota</taxon>
        <taxon>Viridiplantae</taxon>
        <taxon>Streptophyta</taxon>
        <taxon>Embryophyta</taxon>
        <taxon>Tracheophyta</taxon>
        <taxon>Spermatophyta</taxon>
        <taxon>Magnoliopsida</taxon>
        <taxon>Liliopsida</taxon>
        <taxon>Asparagales</taxon>
        <taxon>Asparagaceae</taxon>
        <taxon>Agavoideae</taxon>
        <taxon>Agave</taxon>
    </lineage>
</organism>
<geneLocation type="chloroplast"/>
<accession>P69629</accession>
<accession>O47025</accession>
<accession>O47034</accession>
<evidence type="ECO:0000250" key="1"/>
<evidence type="ECO:0000256" key="2">
    <source>
        <dbReference type="SAM" id="MobiDB-lite"/>
    </source>
</evidence>
<evidence type="ECO:0000305" key="3"/>
<dbReference type="EMBL" id="X84109">
    <property type="protein sequence ID" value="CAA58916.1"/>
    <property type="molecule type" value="Genomic_DNA"/>
</dbReference>
<dbReference type="SMR" id="P69629"/>
<dbReference type="GO" id="GO:0009507">
    <property type="term" value="C:chloroplast"/>
    <property type="evidence" value="ECO:0007669"/>
    <property type="project" value="UniProtKB-SubCell"/>
</dbReference>
<dbReference type="GO" id="GO:0015935">
    <property type="term" value="C:small ribosomal subunit"/>
    <property type="evidence" value="ECO:0007669"/>
    <property type="project" value="InterPro"/>
</dbReference>
<dbReference type="GO" id="GO:0019843">
    <property type="term" value="F:rRNA binding"/>
    <property type="evidence" value="ECO:0007669"/>
    <property type="project" value="UniProtKB-KW"/>
</dbReference>
<dbReference type="GO" id="GO:0003735">
    <property type="term" value="F:structural constituent of ribosome"/>
    <property type="evidence" value="ECO:0007669"/>
    <property type="project" value="InterPro"/>
</dbReference>
<dbReference type="GO" id="GO:0042274">
    <property type="term" value="P:ribosomal small subunit biogenesis"/>
    <property type="evidence" value="ECO:0007669"/>
    <property type="project" value="TreeGrafter"/>
</dbReference>
<dbReference type="GO" id="GO:0006412">
    <property type="term" value="P:translation"/>
    <property type="evidence" value="ECO:0007669"/>
    <property type="project" value="InterPro"/>
</dbReference>
<dbReference type="CDD" id="cd00165">
    <property type="entry name" value="S4"/>
    <property type="match status" value="1"/>
</dbReference>
<dbReference type="FunFam" id="1.10.1050.10:FF:000002">
    <property type="entry name" value="30S ribosomal protein S4, chloroplastic"/>
    <property type="match status" value="1"/>
</dbReference>
<dbReference type="FunFam" id="3.10.290.10:FF:000081">
    <property type="entry name" value="30S ribosomal protein S4, chloroplastic"/>
    <property type="match status" value="1"/>
</dbReference>
<dbReference type="Gene3D" id="1.10.1050.10">
    <property type="entry name" value="Ribosomal Protein S4 Delta 41, Chain A, domain 1"/>
    <property type="match status" value="1"/>
</dbReference>
<dbReference type="Gene3D" id="3.10.290.10">
    <property type="entry name" value="RNA-binding S4 domain"/>
    <property type="match status" value="1"/>
</dbReference>
<dbReference type="HAMAP" id="MF_01306_B">
    <property type="entry name" value="Ribosomal_uS4_B"/>
    <property type="match status" value="1"/>
</dbReference>
<dbReference type="InterPro" id="IPR022801">
    <property type="entry name" value="Ribosomal_uS4"/>
</dbReference>
<dbReference type="InterPro" id="IPR005709">
    <property type="entry name" value="Ribosomal_uS4_bac-type"/>
</dbReference>
<dbReference type="InterPro" id="IPR018079">
    <property type="entry name" value="Ribosomal_uS4_CS"/>
</dbReference>
<dbReference type="InterPro" id="IPR001912">
    <property type="entry name" value="Ribosomal_uS4_N"/>
</dbReference>
<dbReference type="InterPro" id="IPR002942">
    <property type="entry name" value="S4_RNA-bd"/>
</dbReference>
<dbReference type="InterPro" id="IPR036986">
    <property type="entry name" value="S4_RNA-bd_sf"/>
</dbReference>
<dbReference type="NCBIfam" id="NF003717">
    <property type="entry name" value="PRK05327.1"/>
    <property type="match status" value="1"/>
</dbReference>
<dbReference type="NCBIfam" id="TIGR01017">
    <property type="entry name" value="rpsD_bact"/>
    <property type="match status" value="1"/>
</dbReference>
<dbReference type="PANTHER" id="PTHR11831">
    <property type="entry name" value="30S 40S RIBOSOMAL PROTEIN"/>
    <property type="match status" value="1"/>
</dbReference>
<dbReference type="PANTHER" id="PTHR11831:SF4">
    <property type="entry name" value="SMALL RIBOSOMAL SUBUNIT PROTEIN US4M"/>
    <property type="match status" value="1"/>
</dbReference>
<dbReference type="Pfam" id="PF00163">
    <property type="entry name" value="Ribosomal_S4"/>
    <property type="match status" value="1"/>
</dbReference>
<dbReference type="Pfam" id="PF01479">
    <property type="entry name" value="S4"/>
    <property type="match status" value="1"/>
</dbReference>
<dbReference type="SMART" id="SM01390">
    <property type="entry name" value="Ribosomal_S4"/>
    <property type="match status" value="1"/>
</dbReference>
<dbReference type="SMART" id="SM00363">
    <property type="entry name" value="S4"/>
    <property type="match status" value="1"/>
</dbReference>
<dbReference type="SUPFAM" id="SSF55174">
    <property type="entry name" value="Alpha-L RNA-binding motif"/>
    <property type="match status" value="1"/>
</dbReference>
<dbReference type="PROSITE" id="PS00632">
    <property type="entry name" value="RIBOSOMAL_S4"/>
    <property type="match status" value="1"/>
</dbReference>
<dbReference type="PROSITE" id="PS50889">
    <property type="entry name" value="S4"/>
    <property type="match status" value="1"/>
</dbReference>
<comment type="function">
    <text evidence="1">One of the primary rRNA binding proteins, it binds directly to 16S rRNA where it nucleates assembly of the body of the 30S subunit.</text>
</comment>
<comment type="function">
    <text evidence="1">With S5 and S12 plays an important role in translational accuracy.</text>
</comment>
<comment type="subunit">
    <text evidence="1">Part of the 30S ribosomal subunit. Contacts protein S5. The interaction surface between S4 and S5 is involved in control of translational fidelity (By similarity).</text>
</comment>
<comment type="subcellular location">
    <subcellularLocation>
        <location>Plastid</location>
        <location>Chloroplast</location>
    </subcellularLocation>
</comment>
<comment type="similarity">
    <text evidence="3">Belongs to the universal ribosomal protein uS4 family.</text>
</comment>
<gene>
    <name type="primary">rps4</name>
</gene>